<organism>
    <name type="scientific">Bos taurus</name>
    <name type="common">Bovine</name>
    <dbReference type="NCBI Taxonomy" id="9913"/>
    <lineage>
        <taxon>Eukaryota</taxon>
        <taxon>Metazoa</taxon>
        <taxon>Chordata</taxon>
        <taxon>Craniata</taxon>
        <taxon>Vertebrata</taxon>
        <taxon>Euteleostomi</taxon>
        <taxon>Mammalia</taxon>
        <taxon>Eutheria</taxon>
        <taxon>Laurasiatheria</taxon>
        <taxon>Artiodactyla</taxon>
        <taxon>Ruminantia</taxon>
        <taxon>Pecora</taxon>
        <taxon>Bovidae</taxon>
        <taxon>Bovinae</taxon>
        <taxon>Bos</taxon>
    </lineage>
</organism>
<proteinExistence type="evidence at transcript level"/>
<keyword id="KW-1015">Disulfide bond</keyword>
<keyword id="KW-0325">Glycoprotein</keyword>
<keyword id="KW-1185">Reference proteome</keyword>
<keyword id="KW-0677">Repeat</keyword>
<keyword id="KW-0964">Secreted</keyword>
<keyword id="KW-0732">Signal</keyword>
<reference key="1">
    <citation type="journal article" date="1992" name="J. Immunol.">
        <title>Molecular characterization of the WC1 antigen expressed specifically on bovine CD4-CD8-gamma delta T lymphocytes.</title>
        <authorList>
            <person name="Wijngaard P.L.J."/>
            <person name="Metzelaar M.J."/>
            <person name="Machugh N.D."/>
            <person name="Morrison W.I."/>
            <person name="Clevers H.C."/>
        </authorList>
    </citation>
    <scope>NUCLEOTIDE SEQUENCE [MRNA]</scope>
    <source>
        <tissue>Blood</tissue>
    </source>
</reference>
<reference key="2">
    <citation type="journal article" date="1994" name="J. Immunol.">
        <title>Members of the novel WC1 gene family are differentially expressed on subsets of bovine CD4-CD8- gamma delta T lymphocytes.</title>
        <authorList>
            <person name="Wijngaard P.L.J."/>
            <person name="MacHugh N.D."/>
            <person name="Metzelaar M.J."/>
            <person name="Romberg S."/>
            <person name="Bensaid A."/>
            <person name="Pepin L."/>
            <person name="Davis W.C."/>
            <person name="Clevers H.C."/>
        </authorList>
    </citation>
    <scope>NUCLEOTIDE SEQUENCE [MRNA]</scope>
    <scope>TISSUE SPECIFICITY</scope>
</reference>
<evidence type="ECO:0000255" key="1"/>
<evidence type="ECO:0000255" key="2">
    <source>
        <dbReference type="PROSITE-ProRule" id="PRU00196"/>
    </source>
</evidence>
<evidence type="ECO:0000256" key="3">
    <source>
        <dbReference type="SAM" id="MobiDB-lite"/>
    </source>
</evidence>
<evidence type="ECO:0000269" key="4">
    <source>
    </source>
</evidence>
<comment type="subcellular location">
    <subcellularLocation>
        <location>Secreted</location>
    </subcellularLocation>
</comment>
<comment type="tissue specificity">
    <text evidence="4">Expressed on subsets of CD4-CD8- gamma delta T lymphocytes.</text>
</comment>
<accession>P30205</accession>
<sequence>MALGRHLSLRGLCVLLLGTMVGGQALELRLKDGVHRCEGRVEVKHQGEWGTVDGYRWTLKDASVVCRQLGCGAAIGFPGGAYFGPGLGPIWLLYTSCEGTESTVSDCEHSNIKDYRNDGYNHGRDAGVVCSGFVRLAGGDGPCSGRVEVHSGEAWIPVSDGNFTLATAQIICAELGCGKAVSVLGHELFRESSAQVWAEEFRCEGEEPELWVCPRVPCPGGTCHHSGSAQVVCSAYSEVRLMTNGSSQCEGQVEMNISGQWRALCASHWSLANANVICRQLGCGVAISTPGGPHLVEEGDQILTARFHCSGAESFLWSCPVTALGGPDCSHGNTASVICSGNQIQVLPQCNDSVSQPTGSAASEDSAPYCSDSRQLRLVDGGGPCAGRVEILDQGSWGTICDDGWDLDDARVVCRQLGCGEALNATGSAHFGAGSGPIWLDNLNCTGKESHVWRCPSRGWGQHNCRHKQDAGVICSEFLALRMVSEDQQCAGWLEVFYNGTWGSVCRNPMEDITVSTICRQLGCGDSGTLNSSVALREGFRPQWVDRIQCRKTDTSLWQCPSDPWNYNSCSPKEEAYIWCADSRQIRLVDGGGRCSGRVEILDQGSWGTICDDRWDLDDARVVCKQLGCGEALDATVSSFFGTGSGPIWLDEVNCRGEESQVWRCPSWGWRQHNCNHQEDAGVICSGFVRLAGGDGPCSGRVEVHSGEAWTPVSDGNFTLPTAQVICAELGCGKAVSVLGHMPFRESDGQVWAEEFRCDGGEPELWSCPRVPCPGGTCLHSGAAQVVCSVYTEVQLMKNGTSQCEGQVEMKISGRWRALCASHWSLANANVVCRQLGCGVAISTPRGPHLVEGGDQISTAQFHCSGAESFLWSCPVTALGGPDCSHGNTASVICSGNHTQVLPQCNDFLSQPAGSAASEESSPYCSDSRQLRLVDGGGPCGGRVEILDQGSWGTICDDDWDLDDARVVCRQLGCGEALNATGSAHFGAGSGPIWLDDLNCTGKESHVWRCPSRGWGRHDCRHKEDAGVICSEFLALRMVSEDQQCAGWLEVFYNGTWGSVCRSPMEDITVSVICRQLGCGDSGSLNTSVGLREGSRPRWVDLIQCRKMDTSLWQCPSGPWKYSSCSPKEEAYISCEGRRPKSCPTAAACTDREKLRLRGGDSECSGRVEVWHNGSWGTVCDDSWSLAEAEVVCQQLGCGQALEAVRSAAFGPGNGSIWLDEVQCGGRESSLWDCVAEPWGQSDCKHEEDAGVRCSGVRTTLPTTTAGTRTTSNSLPGIFSLPGVLCLILGSLLFLVLVILVTQLLRWRAERRALSSYEDALAEAVYEELDYLLTQKEGLGSPDQMTDVPDENYDDAEEVPVPGTPSPSQGNEEEVPPEKEDGVRSSQTGSFLNFSREAANPGEGEESFWLLQGKKGDAGYDDVELSALGTSPVTFS</sequence>
<protein>
    <recommendedName>
        <fullName>Antigen WC1.1</fullName>
    </recommendedName>
</protein>
<feature type="signal peptide" evidence="1">
    <location>
        <begin position="1"/>
        <end position="25"/>
    </location>
</feature>
<feature type="chain" id="PRO_0000033229" description="Antigen WC1.1">
    <location>
        <begin position="26"/>
        <end position="1436"/>
    </location>
</feature>
<feature type="domain" description="SRCR 1" evidence="2">
    <location>
        <begin position="28"/>
        <end position="131"/>
    </location>
</feature>
<feature type="domain" description="SRCR 2" evidence="2">
    <location>
        <begin position="134"/>
        <end position="234"/>
    </location>
</feature>
<feature type="domain" description="SRCR 3" evidence="2">
    <location>
        <begin position="239"/>
        <end position="340"/>
    </location>
</feature>
<feature type="domain" description="SRCR 4" evidence="2">
    <location>
        <begin position="376"/>
        <end position="476"/>
    </location>
</feature>
<feature type="domain" description="SRCR 5" evidence="2">
    <location>
        <begin position="481"/>
        <end position="581"/>
    </location>
</feature>
<feature type="domain" description="SRCR 6" evidence="2">
    <location>
        <begin position="586"/>
        <end position="686"/>
    </location>
</feature>
<feature type="domain" description="SRCR 7" evidence="2">
    <location>
        <begin position="689"/>
        <end position="789"/>
    </location>
</feature>
<feature type="domain" description="SRCR 8" evidence="2">
    <location>
        <begin position="794"/>
        <end position="895"/>
    </location>
</feature>
<feature type="domain" description="SRCR 9" evidence="2">
    <location>
        <begin position="931"/>
        <end position="1031"/>
    </location>
</feature>
<feature type="domain" description="SRCR 10" evidence="2">
    <location>
        <begin position="1036"/>
        <end position="1136"/>
    </location>
</feature>
<feature type="domain" description="SRCR 11" evidence="2">
    <location>
        <begin position="1155"/>
        <end position="1255"/>
    </location>
</feature>
<feature type="region of interest" description="Disordered" evidence="3">
    <location>
        <begin position="1337"/>
        <end position="1410"/>
    </location>
</feature>
<feature type="compositionally biased region" description="Acidic residues" evidence="3">
    <location>
        <begin position="1348"/>
        <end position="1358"/>
    </location>
</feature>
<feature type="compositionally biased region" description="Polar residues" evidence="3">
    <location>
        <begin position="1384"/>
        <end position="1393"/>
    </location>
</feature>
<feature type="glycosylation site" description="N-linked (GlcNAc...) asparagine" evidence="1">
    <location>
        <position position="162"/>
    </location>
</feature>
<feature type="glycosylation site" description="N-linked (GlcNAc...) asparagine" evidence="1">
    <location>
        <position position="244"/>
    </location>
</feature>
<feature type="glycosylation site" description="N-linked (GlcNAc...) asparagine" evidence="1">
    <location>
        <position position="256"/>
    </location>
</feature>
<feature type="glycosylation site" description="N-linked (GlcNAc...) asparagine" evidence="1">
    <location>
        <position position="351"/>
    </location>
</feature>
<feature type="glycosylation site" description="N-linked (GlcNAc...) asparagine" evidence="1">
    <location>
        <position position="424"/>
    </location>
</feature>
<feature type="glycosylation site" description="N-linked (GlcNAc...) asparagine" evidence="1">
    <location>
        <position position="444"/>
    </location>
</feature>
<feature type="glycosylation site" description="N-linked (GlcNAc...) asparagine" evidence="1">
    <location>
        <position position="499"/>
    </location>
</feature>
<feature type="glycosylation site" description="N-linked (GlcNAc...) asparagine" evidence="1">
    <location>
        <position position="531"/>
    </location>
</feature>
<feature type="glycosylation site" description="N-linked (GlcNAc...) asparagine" evidence="1">
    <location>
        <position position="717"/>
    </location>
</feature>
<feature type="glycosylation site" description="N-linked (GlcNAc...) asparagine" evidence="1">
    <location>
        <position position="799"/>
    </location>
</feature>
<feature type="glycosylation site" description="N-linked (GlcNAc...) asparagine" evidence="1">
    <location>
        <position position="897"/>
    </location>
</feature>
<feature type="glycosylation site" description="N-linked (GlcNAc...) asparagine" evidence="1">
    <location>
        <position position="979"/>
    </location>
</feature>
<feature type="glycosylation site" description="N-linked (GlcNAc...) asparagine" evidence="1">
    <location>
        <position position="999"/>
    </location>
</feature>
<feature type="glycosylation site" description="N-linked (GlcNAc...) asparagine" evidence="1">
    <location>
        <position position="1054"/>
    </location>
</feature>
<feature type="glycosylation site" description="N-linked (GlcNAc...) asparagine" evidence="1">
    <location>
        <position position="1086"/>
    </location>
</feature>
<feature type="glycosylation site" description="N-linked (GlcNAc...) asparagine" evidence="1">
    <location>
        <position position="1173"/>
    </location>
</feature>
<feature type="glycosylation site" description="N-linked (GlcNAc...) asparagine" evidence="1">
    <location>
        <position position="1214"/>
    </location>
</feature>
<feature type="glycosylation site" description="N-linked (GlcNAc...) asparagine" evidence="1">
    <location>
        <position position="1393"/>
    </location>
</feature>
<feature type="disulfide bond" evidence="2">
    <location>
        <begin position="66"/>
        <end position="130"/>
    </location>
</feature>
<feature type="disulfide bond" evidence="2">
    <location>
        <begin position="97"/>
        <end position="107"/>
    </location>
</feature>
<feature type="disulfide bond" evidence="2">
    <location>
        <begin position="172"/>
        <end position="233"/>
    </location>
</feature>
<feature type="disulfide bond" evidence="2">
    <location>
        <begin position="203"/>
        <end position="213"/>
    </location>
</feature>
<feature type="disulfide bond" evidence="2">
    <location>
        <begin position="265"/>
        <end position="329"/>
    </location>
</feature>
<feature type="disulfide bond" evidence="2">
    <location>
        <begin position="278"/>
        <end position="339"/>
    </location>
</feature>
<feature type="disulfide bond" evidence="2">
    <location>
        <begin position="309"/>
        <end position="319"/>
    </location>
</feature>
<feature type="disulfide bond" evidence="2">
    <location>
        <begin position="401"/>
        <end position="465"/>
    </location>
</feature>
<feature type="disulfide bond" evidence="2">
    <location>
        <begin position="414"/>
        <end position="475"/>
    </location>
</feature>
<feature type="disulfide bond" evidence="2">
    <location>
        <begin position="445"/>
        <end position="455"/>
    </location>
</feature>
<feature type="disulfide bond" evidence="2">
    <location>
        <begin position="506"/>
        <end position="570"/>
    </location>
</feature>
<feature type="disulfide bond" evidence="2">
    <location>
        <begin position="519"/>
        <end position="580"/>
    </location>
</feature>
<feature type="disulfide bond" evidence="2">
    <location>
        <begin position="550"/>
        <end position="560"/>
    </location>
</feature>
<feature type="disulfide bond" evidence="2">
    <location>
        <begin position="611"/>
        <end position="675"/>
    </location>
</feature>
<feature type="disulfide bond" evidence="2">
    <location>
        <begin position="624"/>
        <end position="685"/>
    </location>
</feature>
<feature type="disulfide bond" evidence="2">
    <location>
        <begin position="655"/>
        <end position="665"/>
    </location>
</feature>
<feature type="disulfide bond" evidence="2">
    <location>
        <begin position="727"/>
        <end position="788"/>
    </location>
</feature>
<feature type="disulfide bond" evidence="2">
    <location>
        <begin position="758"/>
        <end position="768"/>
    </location>
</feature>
<feature type="disulfide bond" evidence="2">
    <location>
        <begin position="820"/>
        <end position="884"/>
    </location>
</feature>
<feature type="disulfide bond" evidence="2">
    <location>
        <begin position="833"/>
        <end position="894"/>
    </location>
</feature>
<feature type="disulfide bond" evidence="2">
    <location>
        <begin position="864"/>
        <end position="874"/>
    </location>
</feature>
<feature type="disulfide bond" evidence="2">
    <location>
        <begin position="956"/>
        <end position="1020"/>
    </location>
</feature>
<feature type="disulfide bond" evidence="2">
    <location>
        <begin position="969"/>
        <end position="1030"/>
    </location>
</feature>
<feature type="disulfide bond" evidence="2">
    <location>
        <begin position="1000"/>
        <end position="1010"/>
    </location>
</feature>
<feature type="disulfide bond" evidence="2">
    <location>
        <begin position="1061"/>
        <end position="1125"/>
    </location>
</feature>
<feature type="disulfide bond" evidence="2">
    <location>
        <begin position="1074"/>
        <end position="1135"/>
    </location>
</feature>
<feature type="disulfide bond" evidence="2">
    <location>
        <begin position="1105"/>
        <end position="1115"/>
    </location>
</feature>
<feature type="disulfide bond" evidence="2">
    <location>
        <begin position="1180"/>
        <end position="1244"/>
    </location>
</feature>
<feature type="disulfide bond" evidence="2">
    <location>
        <begin position="1193"/>
        <end position="1254"/>
    </location>
</feature>
<feature type="disulfide bond" evidence="2">
    <location>
        <begin position="1224"/>
        <end position="1234"/>
    </location>
</feature>
<name>WC11_BOVIN</name>
<dbReference type="EMBL" id="X63723">
    <property type="protein sequence ID" value="CAA45255.1"/>
    <property type="molecule type" value="mRNA"/>
</dbReference>
<dbReference type="PIR" id="A46496">
    <property type="entry name" value="A46496"/>
</dbReference>
<dbReference type="RefSeq" id="NP_788824.1">
    <property type="nucleotide sequence ID" value="NM_176651.1"/>
</dbReference>
<dbReference type="SMR" id="P30205"/>
<dbReference type="STRING" id="9913.ENSBTAP00000074579"/>
<dbReference type="GlyGen" id="P30205">
    <property type="glycosylation" value="18 sites"/>
</dbReference>
<dbReference type="iPTMnet" id="P30205"/>
<dbReference type="PaxDb" id="9913-ENSBTAP00000052853"/>
<dbReference type="GeneID" id="338056"/>
<dbReference type="KEGG" id="bta:338056"/>
<dbReference type="CTD" id="283316"/>
<dbReference type="eggNOG" id="ENOG502QQ5W">
    <property type="taxonomic scope" value="Eukaryota"/>
</dbReference>
<dbReference type="InParanoid" id="P30205"/>
<dbReference type="OrthoDB" id="536948at2759"/>
<dbReference type="Proteomes" id="UP000009136">
    <property type="component" value="Unplaced"/>
</dbReference>
<dbReference type="GO" id="GO:0009897">
    <property type="term" value="C:external side of plasma membrane"/>
    <property type="evidence" value="ECO:0000318"/>
    <property type="project" value="GO_Central"/>
</dbReference>
<dbReference type="GO" id="GO:0005576">
    <property type="term" value="C:extracellular region"/>
    <property type="evidence" value="ECO:0007669"/>
    <property type="project" value="UniProtKB-SubCell"/>
</dbReference>
<dbReference type="FunFam" id="3.10.250.10:FF:000012">
    <property type="entry name" value="CD163 molecule like 1"/>
    <property type="match status" value="2"/>
</dbReference>
<dbReference type="FunFam" id="3.10.250.10:FF:000004">
    <property type="entry name" value="Scavenger receptor cysteine-rich type 1 protein M130"/>
    <property type="match status" value="4"/>
</dbReference>
<dbReference type="FunFam" id="3.10.250.10:FF:000009">
    <property type="entry name" value="WC1"/>
    <property type="match status" value="5"/>
</dbReference>
<dbReference type="Gene3D" id="3.10.250.10">
    <property type="entry name" value="SRCR-like domain"/>
    <property type="match status" value="11"/>
</dbReference>
<dbReference type="InterPro" id="IPR001190">
    <property type="entry name" value="SRCR"/>
</dbReference>
<dbReference type="InterPro" id="IPR036772">
    <property type="entry name" value="SRCR-like_dom_sf"/>
</dbReference>
<dbReference type="PANTHER" id="PTHR48071:SF27">
    <property type="entry name" value="SCAVENGER RECEPTOR CYSTEINE-RICH TYPE 1 PROTEIN M130-LIKE"/>
    <property type="match status" value="1"/>
</dbReference>
<dbReference type="PANTHER" id="PTHR48071">
    <property type="entry name" value="SRCR DOMAIN-CONTAINING PROTEIN"/>
    <property type="match status" value="1"/>
</dbReference>
<dbReference type="Pfam" id="PF00530">
    <property type="entry name" value="SRCR"/>
    <property type="match status" value="11"/>
</dbReference>
<dbReference type="PRINTS" id="PR00258">
    <property type="entry name" value="SPERACTRCPTR"/>
</dbReference>
<dbReference type="SMART" id="SM00202">
    <property type="entry name" value="SR"/>
    <property type="match status" value="11"/>
</dbReference>
<dbReference type="SUPFAM" id="SSF56487">
    <property type="entry name" value="SRCR-like"/>
    <property type="match status" value="11"/>
</dbReference>
<dbReference type="PROSITE" id="PS00420">
    <property type="entry name" value="SRCR_1"/>
    <property type="match status" value="4"/>
</dbReference>
<dbReference type="PROSITE" id="PS50287">
    <property type="entry name" value="SRCR_2"/>
    <property type="match status" value="11"/>
</dbReference>